<name>EFTS_SYNPW</name>
<protein>
    <recommendedName>
        <fullName evidence="1">Elongation factor Ts</fullName>
        <shortName evidence="1">EF-Ts</shortName>
    </recommendedName>
</protein>
<sequence>MAAAVSAKLVKDLRDKTGAGMMDCKKALAATDGDADKAIEWLRQKGIASAEKKSGRTAAEGAIGSYIHTGARVGVLIEINCETDFVARGDMFQELLRDVSMQVAACPGVEYVNTDDIPSEIREREKAIEMGRDDLDGKPEQMKEKIVEGRINKRLKELALMEQPFIKDSSLTVAELVKQTAGKIGENVKVRRFTRYTLGEGIEVEENDFAAEVASMTKG</sequence>
<dbReference type="EMBL" id="CT971583">
    <property type="protein sequence ID" value="CAK23754.1"/>
    <property type="molecule type" value="Genomic_DNA"/>
</dbReference>
<dbReference type="SMR" id="A5GLD9"/>
<dbReference type="STRING" id="32051.SynWH7803_1328"/>
<dbReference type="KEGG" id="syx:SynWH7803_1328"/>
<dbReference type="eggNOG" id="COG0264">
    <property type="taxonomic scope" value="Bacteria"/>
</dbReference>
<dbReference type="HOGENOM" id="CLU_047155_1_1_3"/>
<dbReference type="OrthoDB" id="9808348at2"/>
<dbReference type="Proteomes" id="UP000001566">
    <property type="component" value="Chromosome"/>
</dbReference>
<dbReference type="GO" id="GO:0005737">
    <property type="term" value="C:cytoplasm"/>
    <property type="evidence" value="ECO:0007669"/>
    <property type="project" value="UniProtKB-SubCell"/>
</dbReference>
<dbReference type="GO" id="GO:0003746">
    <property type="term" value="F:translation elongation factor activity"/>
    <property type="evidence" value="ECO:0007669"/>
    <property type="project" value="UniProtKB-UniRule"/>
</dbReference>
<dbReference type="CDD" id="cd14275">
    <property type="entry name" value="UBA_EF-Ts"/>
    <property type="match status" value="1"/>
</dbReference>
<dbReference type="FunFam" id="1.10.286.20:FF:000001">
    <property type="entry name" value="Elongation factor Ts"/>
    <property type="match status" value="1"/>
</dbReference>
<dbReference type="FunFam" id="1.10.8.10:FF:000001">
    <property type="entry name" value="Elongation factor Ts"/>
    <property type="match status" value="1"/>
</dbReference>
<dbReference type="Gene3D" id="1.10.286.20">
    <property type="match status" value="1"/>
</dbReference>
<dbReference type="Gene3D" id="1.10.8.10">
    <property type="entry name" value="DNA helicase RuvA subunit, C-terminal domain"/>
    <property type="match status" value="1"/>
</dbReference>
<dbReference type="Gene3D" id="3.30.479.20">
    <property type="entry name" value="Elongation factor Ts, dimerisation domain"/>
    <property type="match status" value="1"/>
</dbReference>
<dbReference type="HAMAP" id="MF_00050">
    <property type="entry name" value="EF_Ts"/>
    <property type="match status" value="1"/>
</dbReference>
<dbReference type="InterPro" id="IPR036402">
    <property type="entry name" value="EF-Ts_dimer_sf"/>
</dbReference>
<dbReference type="InterPro" id="IPR001816">
    <property type="entry name" value="Transl_elong_EFTs/EF1B"/>
</dbReference>
<dbReference type="InterPro" id="IPR014039">
    <property type="entry name" value="Transl_elong_EFTs/EF1B_dimer"/>
</dbReference>
<dbReference type="InterPro" id="IPR018101">
    <property type="entry name" value="Transl_elong_Ts_CS"/>
</dbReference>
<dbReference type="InterPro" id="IPR009060">
    <property type="entry name" value="UBA-like_sf"/>
</dbReference>
<dbReference type="NCBIfam" id="TIGR00116">
    <property type="entry name" value="tsf"/>
    <property type="match status" value="2"/>
</dbReference>
<dbReference type="PANTHER" id="PTHR11741">
    <property type="entry name" value="ELONGATION FACTOR TS"/>
    <property type="match status" value="1"/>
</dbReference>
<dbReference type="PANTHER" id="PTHR11741:SF10">
    <property type="entry name" value="POLYPROTEIN OF EF-TS, CHLOROPLASTIC"/>
    <property type="match status" value="1"/>
</dbReference>
<dbReference type="Pfam" id="PF00889">
    <property type="entry name" value="EF_TS"/>
    <property type="match status" value="1"/>
</dbReference>
<dbReference type="SUPFAM" id="SSF54713">
    <property type="entry name" value="Elongation factor Ts (EF-Ts), dimerisation domain"/>
    <property type="match status" value="1"/>
</dbReference>
<dbReference type="SUPFAM" id="SSF46934">
    <property type="entry name" value="UBA-like"/>
    <property type="match status" value="1"/>
</dbReference>
<dbReference type="PROSITE" id="PS01126">
    <property type="entry name" value="EF_TS_1"/>
    <property type="match status" value="1"/>
</dbReference>
<dbReference type="PROSITE" id="PS01127">
    <property type="entry name" value="EF_TS_2"/>
    <property type="match status" value="1"/>
</dbReference>
<organism>
    <name type="scientific">Synechococcus sp. (strain WH7803)</name>
    <dbReference type="NCBI Taxonomy" id="32051"/>
    <lineage>
        <taxon>Bacteria</taxon>
        <taxon>Bacillati</taxon>
        <taxon>Cyanobacteriota</taxon>
        <taxon>Cyanophyceae</taxon>
        <taxon>Synechococcales</taxon>
        <taxon>Synechococcaceae</taxon>
        <taxon>Synechococcus</taxon>
    </lineage>
</organism>
<keyword id="KW-0963">Cytoplasm</keyword>
<keyword id="KW-0251">Elongation factor</keyword>
<keyword id="KW-0648">Protein biosynthesis</keyword>
<keyword id="KW-1185">Reference proteome</keyword>
<proteinExistence type="inferred from homology"/>
<evidence type="ECO:0000255" key="1">
    <source>
        <dbReference type="HAMAP-Rule" id="MF_00050"/>
    </source>
</evidence>
<comment type="function">
    <text evidence="1">Associates with the EF-Tu.GDP complex and induces the exchange of GDP to GTP. It remains bound to the aminoacyl-tRNA.EF-Tu.GTP complex up to the GTP hydrolysis stage on the ribosome.</text>
</comment>
<comment type="subcellular location">
    <subcellularLocation>
        <location evidence="1">Cytoplasm</location>
    </subcellularLocation>
</comment>
<comment type="similarity">
    <text evidence="1">Belongs to the EF-Ts family.</text>
</comment>
<accession>A5GLD9</accession>
<gene>
    <name evidence="1" type="primary">tsf</name>
    <name type="ordered locus">SynWH7803_1328</name>
</gene>
<reference key="1">
    <citation type="submission" date="2006-05" db="EMBL/GenBank/DDBJ databases">
        <authorList>
            <consortium name="Genoscope"/>
        </authorList>
    </citation>
    <scope>NUCLEOTIDE SEQUENCE [LARGE SCALE GENOMIC DNA]</scope>
    <source>
        <strain>WH7803</strain>
    </source>
</reference>
<feature type="chain" id="PRO_0000323471" description="Elongation factor Ts">
    <location>
        <begin position="1"/>
        <end position="219"/>
    </location>
</feature>
<feature type="region of interest" description="Involved in Mg(2+) ion dislocation from EF-Tu" evidence="1">
    <location>
        <begin position="83"/>
        <end position="86"/>
    </location>
</feature>